<accession>A5EHF4</accession>
<sequence length="232" mass="25210">MSISNSIRAQIPPIHPEGYPFIGGFALVSLILFWIFTPLGWIGTLLTVWCALFFRDPIRVTPQREGLVVAPADGRISMITRALPPAELGLGDRPLLRVSIFMSVFNVHVNRSPVAGRIEKISYRPGAFINAELDKASEDNERNSLAISTPHGKIGVVQIAGLVARRIVSFVREGQTVGAGERFGLIRFGSRLDVYLPDGTEVLVSEGQTAIAGETILADFDVATPGLTFRSQ</sequence>
<keyword id="KW-1003">Cell membrane</keyword>
<keyword id="KW-0210">Decarboxylase</keyword>
<keyword id="KW-0444">Lipid biosynthesis</keyword>
<keyword id="KW-0443">Lipid metabolism</keyword>
<keyword id="KW-0456">Lyase</keyword>
<keyword id="KW-0472">Membrane</keyword>
<keyword id="KW-0594">Phospholipid biosynthesis</keyword>
<keyword id="KW-1208">Phospholipid metabolism</keyword>
<keyword id="KW-0670">Pyruvate</keyword>
<keyword id="KW-1185">Reference proteome</keyword>
<keyword id="KW-0865">Zymogen</keyword>
<dbReference type="EC" id="4.1.1.65" evidence="1"/>
<dbReference type="EMBL" id="CP000494">
    <property type="protein sequence ID" value="ABQ35598.1"/>
    <property type="molecule type" value="Genomic_DNA"/>
</dbReference>
<dbReference type="SMR" id="A5EHF4"/>
<dbReference type="STRING" id="288000.BBta_3505"/>
<dbReference type="KEGG" id="bbt:BBta_3505"/>
<dbReference type="eggNOG" id="COG0688">
    <property type="taxonomic scope" value="Bacteria"/>
</dbReference>
<dbReference type="HOGENOM" id="CLU_072492_0_0_5"/>
<dbReference type="OrthoDB" id="9790893at2"/>
<dbReference type="UniPathway" id="UPA00558">
    <property type="reaction ID" value="UER00616"/>
</dbReference>
<dbReference type="Proteomes" id="UP000000246">
    <property type="component" value="Chromosome"/>
</dbReference>
<dbReference type="GO" id="GO:0005886">
    <property type="term" value="C:plasma membrane"/>
    <property type="evidence" value="ECO:0007669"/>
    <property type="project" value="UniProtKB-SubCell"/>
</dbReference>
<dbReference type="GO" id="GO:0004609">
    <property type="term" value="F:phosphatidylserine decarboxylase activity"/>
    <property type="evidence" value="ECO:0007669"/>
    <property type="project" value="UniProtKB-UniRule"/>
</dbReference>
<dbReference type="GO" id="GO:0006646">
    <property type="term" value="P:phosphatidylethanolamine biosynthetic process"/>
    <property type="evidence" value="ECO:0007669"/>
    <property type="project" value="UniProtKB-UniRule"/>
</dbReference>
<dbReference type="HAMAP" id="MF_00664">
    <property type="entry name" value="PS_decarb_PSD_A"/>
    <property type="match status" value="1"/>
</dbReference>
<dbReference type="InterPro" id="IPR003817">
    <property type="entry name" value="PS_Dcarbxylase"/>
</dbReference>
<dbReference type="InterPro" id="IPR033175">
    <property type="entry name" value="PSD-A"/>
</dbReference>
<dbReference type="NCBIfam" id="NF003677">
    <property type="entry name" value="PRK05305.1-1"/>
    <property type="match status" value="1"/>
</dbReference>
<dbReference type="NCBIfam" id="NF003678">
    <property type="entry name" value="PRK05305.1-2"/>
    <property type="match status" value="1"/>
</dbReference>
<dbReference type="NCBIfam" id="NF003679">
    <property type="entry name" value="PRK05305.1-3"/>
    <property type="match status" value="1"/>
</dbReference>
<dbReference type="NCBIfam" id="NF003685">
    <property type="entry name" value="PRK05305.2-5"/>
    <property type="match status" value="1"/>
</dbReference>
<dbReference type="PANTHER" id="PTHR35809">
    <property type="entry name" value="ARCHAETIDYLSERINE DECARBOXYLASE PROENZYME-RELATED"/>
    <property type="match status" value="1"/>
</dbReference>
<dbReference type="PANTHER" id="PTHR35809:SF1">
    <property type="entry name" value="ARCHAETIDYLSERINE DECARBOXYLASE PROENZYME-RELATED"/>
    <property type="match status" value="1"/>
</dbReference>
<dbReference type="Pfam" id="PF02666">
    <property type="entry name" value="PS_Dcarbxylase"/>
    <property type="match status" value="1"/>
</dbReference>
<evidence type="ECO:0000255" key="1">
    <source>
        <dbReference type="HAMAP-Rule" id="MF_00664"/>
    </source>
</evidence>
<organism>
    <name type="scientific">Bradyrhizobium sp. (strain BTAi1 / ATCC BAA-1182)</name>
    <dbReference type="NCBI Taxonomy" id="288000"/>
    <lineage>
        <taxon>Bacteria</taxon>
        <taxon>Pseudomonadati</taxon>
        <taxon>Pseudomonadota</taxon>
        <taxon>Alphaproteobacteria</taxon>
        <taxon>Hyphomicrobiales</taxon>
        <taxon>Nitrobacteraceae</taxon>
        <taxon>Bradyrhizobium</taxon>
    </lineage>
</organism>
<gene>
    <name evidence="1" type="primary">psd</name>
    <name type="ordered locus">BBta_3505</name>
</gene>
<proteinExistence type="inferred from homology"/>
<comment type="function">
    <text evidence="1">Catalyzes the formation of phosphatidylethanolamine (PtdEtn) from phosphatidylserine (PtdSer).</text>
</comment>
<comment type="catalytic activity">
    <reaction evidence="1">
        <text>a 1,2-diacyl-sn-glycero-3-phospho-L-serine + H(+) = a 1,2-diacyl-sn-glycero-3-phosphoethanolamine + CO2</text>
        <dbReference type="Rhea" id="RHEA:20828"/>
        <dbReference type="ChEBI" id="CHEBI:15378"/>
        <dbReference type="ChEBI" id="CHEBI:16526"/>
        <dbReference type="ChEBI" id="CHEBI:57262"/>
        <dbReference type="ChEBI" id="CHEBI:64612"/>
        <dbReference type="EC" id="4.1.1.65"/>
    </reaction>
</comment>
<comment type="cofactor">
    <cofactor evidence="1">
        <name>pyruvate</name>
        <dbReference type="ChEBI" id="CHEBI:15361"/>
    </cofactor>
    <text evidence="1">Binds 1 pyruvoyl group covalently per subunit.</text>
</comment>
<comment type="pathway">
    <text evidence="1">Phospholipid metabolism; phosphatidylethanolamine biosynthesis; phosphatidylethanolamine from CDP-diacylglycerol: step 2/2.</text>
</comment>
<comment type="subunit">
    <text evidence="1">Heterodimer of a large membrane-associated beta subunit and a small pyruvoyl-containing alpha subunit.</text>
</comment>
<comment type="subcellular location">
    <subcellularLocation>
        <location evidence="1">Cell membrane</location>
        <topology evidence="1">Peripheral membrane protein</topology>
    </subcellularLocation>
</comment>
<comment type="PTM">
    <text evidence="1">Is synthesized initially as an inactive proenzyme. Formation of the active enzyme involves a self-maturation process in which the active site pyruvoyl group is generated from an internal serine residue via an autocatalytic post-translational modification. Two non-identical subunits are generated from the proenzyme in this reaction, and the pyruvate is formed at the N-terminus of the alpha chain, which is derived from the carboxyl end of the proenzyme. The post-translation cleavage follows an unusual pathway, termed non-hydrolytic serinolysis, in which the side chain hydroxyl group of the serine supplies its oxygen atom to form the C-terminus of the beta chain, while the remainder of the serine residue undergoes an oxidative deamination to produce ammonia and the pyruvoyl prosthetic group on the alpha chain.</text>
</comment>
<comment type="similarity">
    <text evidence="1">Belongs to the phosphatidylserine decarboxylase family. PSD-A subfamily.</text>
</comment>
<protein>
    <recommendedName>
        <fullName evidence="1">Phosphatidylserine decarboxylase proenzyme</fullName>
        <ecNumber evidence="1">4.1.1.65</ecNumber>
    </recommendedName>
    <component>
        <recommendedName>
            <fullName evidence="1">Phosphatidylserine decarboxylase alpha chain</fullName>
        </recommendedName>
    </component>
    <component>
        <recommendedName>
            <fullName evidence="1">Phosphatidylserine decarboxylase beta chain</fullName>
        </recommendedName>
    </component>
</protein>
<feature type="chain" id="PRO_1000026626" description="Phosphatidylserine decarboxylase beta chain" evidence="1">
    <location>
        <begin position="1"/>
        <end position="189"/>
    </location>
</feature>
<feature type="chain" id="PRO_1000026627" description="Phosphatidylserine decarboxylase alpha chain" evidence="1">
    <location>
        <begin position="190"/>
        <end position="232"/>
    </location>
</feature>
<feature type="active site" description="Schiff-base intermediate with substrate; via pyruvic acid" evidence="1">
    <location>
        <position position="190"/>
    </location>
</feature>
<feature type="site" description="Cleavage (non-hydrolytic); by autocatalysis" evidence="1">
    <location>
        <begin position="189"/>
        <end position="190"/>
    </location>
</feature>
<feature type="modified residue" description="Pyruvic acid (Ser); by autocatalysis" evidence="1">
    <location>
        <position position="190"/>
    </location>
</feature>
<name>PSD_BRASB</name>
<reference key="1">
    <citation type="journal article" date="2007" name="Science">
        <title>Legumes symbioses: absence of nod genes in photosynthetic bradyrhizobia.</title>
        <authorList>
            <person name="Giraud E."/>
            <person name="Moulin L."/>
            <person name="Vallenet D."/>
            <person name="Barbe V."/>
            <person name="Cytryn E."/>
            <person name="Avarre J.-C."/>
            <person name="Jaubert M."/>
            <person name="Simon D."/>
            <person name="Cartieaux F."/>
            <person name="Prin Y."/>
            <person name="Bena G."/>
            <person name="Hannibal L."/>
            <person name="Fardoux J."/>
            <person name="Kojadinovic M."/>
            <person name="Vuillet L."/>
            <person name="Lajus A."/>
            <person name="Cruveiller S."/>
            <person name="Rouy Z."/>
            <person name="Mangenot S."/>
            <person name="Segurens B."/>
            <person name="Dossat C."/>
            <person name="Franck W.L."/>
            <person name="Chang W.-S."/>
            <person name="Saunders E."/>
            <person name="Bruce D."/>
            <person name="Richardson P."/>
            <person name="Normand P."/>
            <person name="Dreyfus B."/>
            <person name="Pignol D."/>
            <person name="Stacey G."/>
            <person name="Emerich D."/>
            <person name="Vermeglio A."/>
            <person name="Medigue C."/>
            <person name="Sadowsky M."/>
        </authorList>
    </citation>
    <scope>NUCLEOTIDE SEQUENCE [LARGE SCALE GENOMIC DNA]</scope>
    <source>
        <strain>BTAi1 / ATCC BAA-1182</strain>
    </source>
</reference>